<gene>
    <name type="primary">OSBP</name>
</gene>
<proteinExistence type="evidence at protein level"/>
<evidence type="ECO:0000250" key="1">
    <source>
        <dbReference type="UniProtKB" id="P22059"/>
    </source>
</evidence>
<evidence type="ECO:0000250" key="2">
    <source>
        <dbReference type="UniProtKB" id="P35844"/>
    </source>
</evidence>
<evidence type="ECO:0000250" key="3">
    <source>
        <dbReference type="UniProtKB" id="Q3B7Z2"/>
    </source>
</evidence>
<evidence type="ECO:0000255" key="4"/>
<evidence type="ECO:0000255" key="5">
    <source>
        <dbReference type="PROSITE-ProRule" id="PRU00145"/>
    </source>
</evidence>
<evidence type="ECO:0000256" key="6">
    <source>
        <dbReference type="SAM" id="MobiDB-lite"/>
    </source>
</evidence>
<evidence type="ECO:0000269" key="7">
    <source>
    </source>
</evidence>
<evidence type="ECO:0000305" key="8"/>
<feature type="initiator methionine" description="Removed" evidence="1">
    <location>
        <position position="1"/>
    </location>
</feature>
<feature type="chain" id="PRO_0000100365" description="Oxysterol-binding protein 1">
    <location>
        <begin position="2"/>
        <end position="809"/>
    </location>
</feature>
<feature type="domain" description="PH" evidence="5">
    <location>
        <begin position="90"/>
        <end position="183"/>
    </location>
</feature>
<feature type="region of interest" description="Disordered" evidence="6">
    <location>
        <begin position="17"/>
        <end position="49"/>
    </location>
</feature>
<feature type="region of interest" description="Disordered" evidence="6">
    <location>
        <begin position="63"/>
        <end position="91"/>
    </location>
</feature>
<feature type="region of interest" description="Disordered" evidence="6">
    <location>
        <begin position="332"/>
        <end position="355"/>
    </location>
</feature>
<feature type="region of interest" description="Disordered" evidence="6">
    <location>
        <begin position="729"/>
        <end position="761"/>
    </location>
</feature>
<feature type="coiled-coil region" evidence="4">
    <location>
        <begin position="293"/>
        <end position="328"/>
    </location>
</feature>
<feature type="coiled-coil region" evidence="4">
    <location>
        <begin position="732"/>
        <end position="762"/>
    </location>
</feature>
<feature type="short sequence motif" description="FFAT" evidence="1">
    <location>
        <begin position="360"/>
        <end position="366"/>
    </location>
</feature>
<feature type="compositionally biased region" description="Gly residues" evidence="6">
    <location>
        <begin position="20"/>
        <end position="46"/>
    </location>
</feature>
<feature type="compositionally biased region" description="Gly residues" evidence="6">
    <location>
        <begin position="79"/>
        <end position="90"/>
    </location>
</feature>
<feature type="binding site" evidence="2">
    <location>
        <begin position="119"/>
        <end position="124"/>
    </location>
    <ligand>
        <name>a 1,2-diacyl-sn-glycero-3-phospho-(1D-myo-inositol 4-phosphate)</name>
        <dbReference type="ChEBI" id="CHEBI:58178"/>
    </ligand>
</feature>
<feature type="binding site" evidence="2">
    <location>
        <position position="316"/>
    </location>
    <ligand>
        <name>20-hydroxycholesterol</name>
        <dbReference type="ChEBI" id="CHEBI:1296"/>
    </ligand>
</feature>
<feature type="binding site" evidence="2">
    <location>
        <position position="316"/>
    </location>
    <ligand>
        <name>25-hydroxycholesterol</name>
        <dbReference type="ChEBI" id="CHEBI:42977"/>
    </ligand>
</feature>
<feature type="binding site" evidence="2">
    <location>
        <position position="316"/>
    </location>
    <ligand>
        <name>7beta-hydroxycholesterol</name>
        <dbReference type="ChEBI" id="CHEBI:42989"/>
    </ligand>
</feature>
<feature type="binding site" evidence="2">
    <location>
        <position position="316"/>
    </location>
    <ligand>
        <name>cholesterol</name>
        <dbReference type="ChEBI" id="CHEBI:16113"/>
    </ligand>
</feature>
<feature type="binding site" evidence="2">
    <location>
        <position position="316"/>
    </location>
    <ligand>
        <name>ergosterol</name>
        <dbReference type="ChEBI" id="CHEBI:16933"/>
    </ligand>
</feature>
<feature type="binding site" evidence="2">
    <location>
        <begin position="495"/>
        <end position="498"/>
    </location>
    <ligand>
        <name>a 1,2-diacyl-sn-glycero-3-phospho-(1D-myo-inositol 4-phosphate)</name>
        <dbReference type="ChEBI" id="CHEBI:58178"/>
    </ligand>
</feature>
<feature type="binding site" evidence="2">
    <location>
        <begin position="524"/>
        <end position="525"/>
    </location>
    <ligand>
        <name>a 1,2-diacyl-sn-glycero-3-phospho-(1D-myo-inositol 4-phosphate)</name>
        <dbReference type="ChEBI" id="CHEBI:58178"/>
    </ligand>
</feature>
<feature type="modified residue" description="N-acetylalanine" evidence="1">
    <location>
        <position position="2"/>
    </location>
</feature>
<feature type="modified residue" description="Phosphoserine" evidence="1">
    <location>
        <position position="192"/>
    </location>
</feature>
<feature type="modified residue" description="Phosphoserine" evidence="1">
    <location>
        <position position="195"/>
    </location>
</feature>
<feature type="modified residue" description="Phosphoserine" evidence="1">
    <location>
        <position position="200"/>
    </location>
</feature>
<feature type="modified residue" description="Phosphoserine" evidence="1">
    <location>
        <position position="240"/>
    </location>
</feature>
<feature type="modified residue" description="Phosphoserine" evidence="1">
    <location>
        <position position="242"/>
    </location>
</feature>
<feature type="modified residue" description="Phosphoserine" evidence="1">
    <location>
        <position position="340"/>
    </location>
</feature>
<feature type="modified residue" description="Phosphoserine" evidence="3">
    <location>
        <position position="347"/>
    </location>
</feature>
<feature type="modified residue" description="Phosphoserine" evidence="1">
    <location>
        <position position="353"/>
    </location>
</feature>
<feature type="modified residue" description="Phosphothreonine" evidence="1">
    <location>
        <position position="379"/>
    </location>
</feature>
<feature type="modified residue" description="Phosphoserine" evidence="1">
    <location>
        <position position="381"/>
    </location>
</feature>
<feature type="modified residue" description="Phosphoserine" evidence="1">
    <location>
        <position position="384"/>
    </location>
</feature>
<feature type="modified residue" description="Phosphoserine" evidence="1">
    <location>
        <position position="387"/>
    </location>
</feature>
<feature type="modified residue" description="Phosphoserine" evidence="1">
    <location>
        <position position="388"/>
    </location>
</feature>
<feature type="modified residue" description="Phosphoserine" evidence="1">
    <location>
        <position position="391"/>
    </location>
</feature>
<feature type="mutagenesis site" description="No effect on cholesterol and 25-hydroxycholesterol binding." evidence="7">
    <original>Y</original>
    <variation>S</variation>
    <location>
        <position position="298"/>
    </location>
</feature>
<feature type="mutagenesis site" description="Abolishes cholesterol and 25-hydroxycholesterol binding." evidence="7">
    <original>Y</original>
    <variation>S</variation>
    <location>
        <position position="458"/>
    </location>
</feature>
<dbReference type="EMBL" id="J05056">
    <property type="protein sequence ID" value="AAA31427.1"/>
    <property type="molecule type" value="mRNA"/>
</dbReference>
<dbReference type="PIR" id="A34404">
    <property type="entry name" value="A34404"/>
</dbReference>
<dbReference type="RefSeq" id="NP_001075702.1">
    <property type="nucleotide sequence ID" value="NM_001082233.1"/>
</dbReference>
<dbReference type="BMRB" id="P16258"/>
<dbReference type="SMR" id="P16258"/>
<dbReference type="FunCoup" id="P16258">
    <property type="interactions" value="2416"/>
</dbReference>
<dbReference type="STRING" id="9986.ENSOCUP00000001854"/>
<dbReference type="iPTMnet" id="P16258"/>
<dbReference type="PaxDb" id="9986-ENSOCUP00000001854"/>
<dbReference type="GeneID" id="100009048"/>
<dbReference type="KEGG" id="ocu:100009048"/>
<dbReference type="CTD" id="5007"/>
<dbReference type="eggNOG" id="KOG1737">
    <property type="taxonomic scope" value="Eukaryota"/>
</dbReference>
<dbReference type="InParanoid" id="P16258"/>
<dbReference type="OrthoDB" id="14833at2759"/>
<dbReference type="Proteomes" id="UP000001811">
    <property type="component" value="Unplaced"/>
</dbReference>
<dbReference type="GO" id="GO:0005829">
    <property type="term" value="C:cytosol"/>
    <property type="evidence" value="ECO:0000250"/>
    <property type="project" value="UniProtKB"/>
</dbReference>
<dbReference type="GO" id="GO:0005789">
    <property type="term" value="C:endoplasmic reticulum membrane"/>
    <property type="evidence" value="ECO:0007669"/>
    <property type="project" value="UniProtKB-SubCell"/>
</dbReference>
<dbReference type="GO" id="GO:0000139">
    <property type="term" value="C:Golgi membrane"/>
    <property type="evidence" value="ECO:0000250"/>
    <property type="project" value="UniProtKB"/>
</dbReference>
<dbReference type="GO" id="GO:0097038">
    <property type="term" value="C:perinuclear endoplasmic reticulum"/>
    <property type="evidence" value="ECO:0007669"/>
    <property type="project" value="TreeGrafter"/>
</dbReference>
<dbReference type="GO" id="GO:0048471">
    <property type="term" value="C:perinuclear region of cytoplasm"/>
    <property type="evidence" value="ECO:0000250"/>
    <property type="project" value="UniProtKB"/>
</dbReference>
<dbReference type="GO" id="GO:0005886">
    <property type="term" value="C:plasma membrane"/>
    <property type="evidence" value="ECO:0007669"/>
    <property type="project" value="TreeGrafter"/>
</dbReference>
<dbReference type="GO" id="GO:0005802">
    <property type="term" value="C:trans-Golgi network"/>
    <property type="evidence" value="ECO:0000250"/>
    <property type="project" value="UniProtKB"/>
</dbReference>
<dbReference type="GO" id="GO:0015485">
    <property type="term" value="F:cholesterol binding"/>
    <property type="evidence" value="ECO:0000314"/>
    <property type="project" value="BHF-UCL"/>
</dbReference>
<dbReference type="GO" id="GO:0070273">
    <property type="term" value="F:phosphatidylinositol-4-phosphate binding"/>
    <property type="evidence" value="ECO:0000250"/>
    <property type="project" value="UniProtKB"/>
</dbReference>
<dbReference type="GO" id="GO:0120015">
    <property type="term" value="F:sterol transfer activity"/>
    <property type="evidence" value="ECO:0000250"/>
    <property type="project" value="UniProtKB"/>
</dbReference>
<dbReference type="GO" id="GO:0032367">
    <property type="term" value="P:intracellular cholesterol transport"/>
    <property type="evidence" value="ECO:0000250"/>
    <property type="project" value="UniProtKB"/>
</dbReference>
<dbReference type="GO" id="GO:0015918">
    <property type="term" value="P:sterol transport"/>
    <property type="evidence" value="ECO:0000250"/>
    <property type="project" value="UniProtKB"/>
</dbReference>
<dbReference type="CDD" id="cd13284">
    <property type="entry name" value="PH_OSBP_ORP4"/>
    <property type="match status" value="1"/>
</dbReference>
<dbReference type="FunFam" id="2.30.29.30:FF:000074">
    <property type="entry name" value="Oxysterol-binding protein"/>
    <property type="match status" value="1"/>
</dbReference>
<dbReference type="FunFam" id="2.40.160.120:FF:000003">
    <property type="entry name" value="Oxysterol-binding protein"/>
    <property type="match status" value="1"/>
</dbReference>
<dbReference type="Gene3D" id="2.40.160.120">
    <property type="match status" value="1"/>
</dbReference>
<dbReference type="Gene3D" id="2.30.29.30">
    <property type="entry name" value="Pleckstrin-homology domain (PH domain)/Phosphotyrosine-binding domain (PTB)"/>
    <property type="match status" value="1"/>
</dbReference>
<dbReference type="InterPro" id="IPR037239">
    <property type="entry name" value="OSBP_sf"/>
</dbReference>
<dbReference type="InterPro" id="IPR000648">
    <property type="entry name" value="Oxysterol-bd"/>
</dbReference>
<dbReference type="InterPro" id="IPR018494">
    <property type="entry name" value="Oxysterol-bd_CS"/>
</dbReference>
<dbReference type="InterPro" id="IPR011993">
    <property type="entry name" value="PH-like_dom_sf"/>
</dbReference>
<dbReference type="InterPro" id="IPR001849">
    <property type="entry name" value="PH_domain"/>
</dbReference>
<dbReference type="PANTHER" id="PTHR10972:SF205">
    <property type="entry name" value="OXYSTEROL-BINDING PROTEIN 1"/>
    <property type="match status" value="1"/>
</dbReference>
<dbReference type="PANTHER" id="PTHR10972">
    <property type="entry name" value="OXYSTEROL-BINDING PROTEIN-RELATED"/>
    <property type="match status" value="1"/>
</dbReference>
<dbReference type="Pfam" id="PF01237">
    <property type="entry name" value="Oxysterol_BP"/>
    <property type="match status" value="1"/>
</dbReference>
<dbReference type="Pfam" id="PF00169">
    <property type="entry name" value="PH"/>
    <property type="match status" value="1"/>
</dbReference>
<dbReference type="SMART" id="SM00233">
    <property type="entry name" value="PH"/>
    <property type="match status" value="1"/>
</dbReference>
<dbReference type="SUPFAM" id="SSF144000">
    <property type="entry name" value="Oxysterol-binding protein-like"/>
    <property type="match status" value="1"/>
</dbReference>
<dbReference type="SUPFAM" id="SSF50729">
    <property type="entry name" value="PH domain-like"/>
    <property type="match status" value="1"/>
</dbReference>
<dbReference type="PROSITE" id="PS01013">
    <property type="entry name" value="OSBP"/>
    <property type="match status" value="1"/>
</dbReference>
<dbReference type="PROSITE" id="PS50003">
    <property type="entry name" value="PH_DOMAIN"/>
    <property type="match status" value="1"/>
</dbReference>
<comment type="function">
    <text evidence="1 7">Lipid transporter involved in lipid countertransport between the Golgi complex and membranes of the endoplasmic reticulum: specifically exchanges sterol with phosphatidylinositol 4-phosphate (PI4P), delivering sterol to the Golgi in exchange for PI4P, which is degraded by the SAC1/SACM1L phosphatase in the endoplasmic reticulum (By similarity). Binds cholesterol and a range of oxysterols including 25-hydroxycholesterol (PubMed:18165705). Cholesterol binding promotes the formation of a complex with PP2A and a tyrosine phosphatase which dephosphorylates ERK1/2, whereas 25-hydroxycholesterol causes its disassembly (By similarity). Regulates cholesterol efflux by decreasing ABCA1 stability (By similarity).</text>
</comment>
<comment type="subunit">
    <text evidence="1 3">Homodimer or homotrimer. Interacts (via FFAT motif) with VAPA. Interacts (via C-terminus) with RELCH (via the third HEAT repeat) (By similarity). Found in a complex composed of RELCH, OSBP1 and RAB11A (By similarity).</text>
</comment>
<comment type="subcellular location">
    <subcellularLocation>
        <location evidence="1">Cytoplasm</location>
        <location evidence="1">Cytosol</location>
    </subcellularLocation>
    <subcellularLocation>
        <location evidence="1">Cytoplasm</location>
        <location evidence="1">Perinuclear region</location>
    </subcellularLocation>
    <subcellularLocation>
        <location evidence="1">Golgi apparatus membrane</location>
        <topology evidence="1">Peripheral membrane protein</topology>
    </subcellularLocation>
    <subcellularLocation>
        <location evidence="1">Endoplasmic reticulum membrane</location>
        <topology evidence="1">Peripheral membrane protein</topology>
    </subcellularLocation>
    <text evidence="1">Predominantly cytosolic.</text>
</comment>
<comment type="domain">
    <text evidence="7">The PH and the Ala/Gly-rich domains control cholesterol binding without affecting 25-hydroxycholesterol binding.</text>
</comment>
<comment type="domain">
    <text evidence="7">The second coiled-coil domain is required for interaction with the tyrosine phosphatase.</text>
</comment>
<comment type="domain">
    <text evidence="1">The FFAT motif is required for interaction with VATA and proper localization of the protein.</text>
</comment>
<comment type="PTM">
    <text>The N-terminus is blocked.</text>
</comment>
<comment type="similarity">
    <text evidence="8">Belongs to the OSBP family.</text>
</comment>
<reference key="1">
    <citation type="journal article" date="1989" name="J. Biol. Chem.">
        <title>cDNA cloning and expression of oxysterol-binding protein, an oligomer with a potential leucine zipper.</title>
        <authorList>
            <person name="Dawson P.A."/>
            <person name="Ridgway N.D."/>
            <person name="Slaughter C.A."/>
            <person name="Brown M.S."/>
            <person name="Goldstein J.L."/>
        </authorList>
    </citation>
    <scope>NUCLEOTIDE SEQUENCE [MRNA]</scope>
    <scope>PARTIAL PROTEIN SEQUENCE</scope>
    <source>
        <tissue>Liver</tissue>
    </source>
</reference>
<reference key="2">
    <citation type="journal article" date="2008" name="J. Biol. Chem.">
        <title>The N-terminus controls sterol binding while the C-terminus regulates the scaffolding function of OSBP.</title>
        <authorList>
            <person name="Wang P.-Y."/>
            <person name="Weng J."/>
            <person name="Lee S."/>
            <person name="Anderson R.G.W."/>
        </authorList>
    </citation>
    <scope>FUNCTION</scope>
    <scope>STEROL-BINDING</scope>
    <scope>DOMAIN</scope>
    <scope>MUTAGENESIS OF TYR-298 AND TYR-458</scope>
</reference>
<keyword id="KW-0007">Acetylation</keyword>
<keyword id="KW-0175">Coiled coil</keyword>
<keyword id="KW-0963">Cytoplasm</keyword>
<keyword id="KW-0903">Direct protein sequencing</keyword>
<keyword id="KW-0256">Endoplasmic reticulum</keyword>
<keyword id="KW-0333">Golgi apparatus</keyword>
<keyword id="KW-0445">Lipid transport</keyword>
<keyword id="KW-0446">Lipid-binding</keyword>
<keyword id="KW-0472">Membrane</keyword>
<keyword id="KW-0597">Phosphoprotein</keyword>
<keyword id="KW-1185">Reference proteome</keyword>
<keyword id="KW-0813">Transport</keyword>
<name>OSBP1_RABIT</name>
<sequence>MAATELRGVVGPGPAAIAAPGGGGAGPPVVGGGGGGRGDAGPGSGAASGTVAAAAAGGQGPGAGGVAAAAGPAPTPPAGGSGSSGTGGSGSAREGWLFKWTNYIKGYQRRWFVLSNGLLSYYRSKAEMRHTCRGTINLATANITVEDSCNFIISNGGAQTYHLKASSEVERQRWVTALELAKAKAVKMLAESDESGDEESVSQTDKTELQNTLRTLSSKVEDLSTCNDLIAKHGTALQRSLSELESLKLPAESNEKIKQVNERATLFRITSNAMINACRDFLVLAQTHSKKWQKSLQYERDQRIRLEETLEQLAKQHNHLERAFRGATVLPAHTSGSAGSGKDQCCSGKGDMSDEDDENEFFDAPEIITMPENLGHKRTGSNISGASSDISLDEQYKHQLEETKKEKRTRIPYKPNYSLNLWSIMKNCIGKELSKIPMPVNFNEPLSMLQRLTEDLEYHELLDRAAKCENSLEQLCYVAAFTVSSYSTTVFRTSKPFNPLLGETFELDRLEENGYRSLCEQVSHHPPAAAHHAESKNGWTLRQEIKITSKFRGKYLSIMPLGTIHCIFHATGHHYTWKKVTTTVHNIIVGKLWIDQSGEIDIVNHKTGDKCNLKFVPYSYFSRDVARKVTGEVTDPSGKVHFALLGTWDEKMDCFKVQPVSGENGGDARQRGHEAEESRVMLWKRNPLPKNAENMYYFSELALTLNAWEGGTAPTDSRLRPDQRLMENGRWDEANAEKQRLEEKQRLSRKKREAEAMKATEDGTPYDPYKALWFERKKDPVTKELTHIYRGEYWECKEKQDWNSCPDIF</sequence>
<accession>P16258</accession>
<protein>
    <recommendedName>
        <fullName>Oxysterol-binding protein 1</fullName>
    </recommendedName>
</protein>
<organism>
    <name type="scientific">Oryctolagus cuniculus</name>
    <name type="common">Rabbit</name>
    <dbReference type="NCBI Taxonomy" id="9986"/>
    <lineage>
        <taxon>Eukaryota</taxon>
        <taxon>Metazoa</taxon>
        <taxon>Chordata</taxon>
        <taxon>Craniata</taxon>
        <taxon>Vertebrata</taxon>
        <taxon>Euteleostomi</taxon>
        <taxon>Mammalia</taxon>
        <taxon>Eutheria</taxon>
        <taxon>Euarchontoglires</taxon>
        <taxon>Glires</taxon>
        <taxon>Lagomorpha</taxon>
        <taxon>Leporidae</taxon>
        <taxon>Oryctolagus</taxon>
    </lineage>
</organism>